<accession>Q9NP31</accession>
<accession>O43817</accession>
<accession>Q5UBZ1</accession>
<accession>Q5VZS4</accession>
<accession>Q5VZS5</accession>
<accession>Q9UPA7</accession>
<dbReference type="EMBL" id="AF106072">
    <property type="protein sequence ID" value="AAF69027.1"/>
    <property type="molecule type" value="Genomic_DNA"/>
</dbReference>
<dbReference type="EMBL" id="AJ000553">
    <property type="protein sequence ID" value="CAA04185.1"/>
    <property type="molecule type" value="mRNA"/>
</dbReference>
<dbReference type="EMBL" id="AY763100">
    <property type="protein sequence ID" value="AAV34675.1"/>
    <property type="molecule type" value="mRNA"/>
</dbReference>
<dbReference type="EMBL" id="AF097744">
    <property type="protein sequence ID" value="AAF43260.1"/>
    <property type="molecule type" value="mRNA"/>
</dbReference>
<dbReference type="EMBL" id="AF051325">
    <property type="protein sequence ID" value="AAC99298.1"/>
    <property type="status" value="ALT_INIT"/>
    <property type="molecule type" value="mRNA"/>
</dbReference>
<dbReference type="EMBL" id="AK222737">
    <property type="protein sequence ID" value="BAD96457.1"/>
    <property type="molecule type" value="mRNA"/>
</dbReference>
<dbReference type="EMBL" id="AL158169">
    <property type="status" value="NOT_ANNOTATED_CDS"/>
    <property type="molecule type" value="Genomic_DNA"/>
</dbReference>
<dbReference type="EMBL" id="AL590666">
    <property type="status" value="NOT_ANNOTATED_CDS"/>
    <property type="molecule type" value="Genomic_DNA"/>
</dbReference>
<dbReference type="EMBL" id="BC012107">
    <property type="protein sequence ID" value="AAH12107.1"/>
    <property type="molecule type" value="mRNA"/>
</dbReference>
<dbReference type="CCDS" id="CCDS1159.1">
    <molecule id="Q9NP31-1"/>
</dbReference>
<dbReference type="CCDS" id="CCDS53380.1">
    <molecule id="Q9NP31-4"/>
</dbReference>
<dbReference type="CCDS" id="CCDS53381.1">
    <molecule id="Q9NP31-2"/>
</dbReference>
<dbReference type="RefSeq" id="NP_001154913.1">
    <molecule id="Q9NP31-2"/>
    <property type="nucleotide sequence ID" value="NM_001161441.2"/>
</dbReference>
<dbReference type="RefSeq" id="NP_001154914.1">
    <molecule id="Q9NP31-4"/>
    <property type="nucleotide sequence ID" value="NM_001161442.2"/>
</dbReference>
<dbReference type="RefSeq" id="NP_001154915.1">
    <molecule id="Q9NP31-3"/>
    <property type="nucleotide sequence ID" value="NM_001161443.2"/>
</dbReference>
<dbReference type="RefSeq" id="NP_001154916.1">
    <molecule id="Q9NP31-1"/>
    <property type="nucleotide sequence ID" value="NM_001161444.2"/>
</dbReference>
<dbReference type="RefSeq" id="NP_003966.2">
    <molecule id="Q9NP31-1"/>
    <property type="nucleotide sequence ID" value="NM_003975.4"/>
</dbReference>
<dbReference type="SMR" id="Q9NP31"/>
<dbReference type="BioGRID" id="114509">
    <property type="interactions" value="47"/>
</dbReference>
<dbReference type="CORUM" id="Q9NP31"/>
<dbReference type="FunCoup" id="Q9NP31">
    <property type="interactions" value="857"/>
</dbReference>
<dbReference type="IntAct" id="Q9NP31">
    <property type="interactions" value="42"/>
</dbReference>
<dbReference type="MINT" id="Q9NP31"/>
<dbReference type="STRING" id="9606.ENSP00000376123"/>
<dbReference type="ChEMBL" id="CHEMBL3217401"/>
<dbReference type="MoonDB" id="Q9NP31">
    <property type="type" value="Predicted"/>
</dbReference>
<dbReference type="iPTMnet" id="Q9NP31"/>
<dbReference type="PhosphoSitePlus" id="Q9NP31"/>
<dbReference type="BioMuta" id="SH2D2A"/>
<dbReference type="DMDM" id="143811460"/>
<dbReference type="jPOST" id="Q9NP31"/>
<dbReference type="MassIVE" id="Q9NP31"/>
<dbReference type="PaxDb" id="9606-ENSP00000376123"/>
<dbReference type="PeptideAtlas" id="Q9NP31"/>
<dbReference type="ProteomicsDB" id="65721"/>
<dbReference type="ProteomicsDB" id="81881">
    <molecule id="Q9NP31-1"/>
</dbReference>
<dbReference type="ProteomicsDB" id="81882">
    <molecule id="Q9NP31-2"/>
</dbReference>
<dbReference type="ProteomicsDB" id="81883">
    <molecule id="Q9NP31-3"/>
</dbReference>
<dbReference type="Pumba" id="Q9NP31"/>
<dbReference type="Antibodypedia" id="20445">
    <property type="antibodies" value="336 antibodies from 30 providers"/>
</dbReference>
<dbReference type="DNASU" id="9047"/>
<dbReference type="Ensembl" id="ENST00000368198.8">
    <molecule id="Q9NP31-4"/>
    <property type="protein sequence ID" value="ENSP00000357181.3"/>
    <property type="gene ID" value="ENSG00000027869.13"/>
</dbReference>
<dbReference type="Ensembl" id="ENST00000368199.8">
    <molecule id="Q9NP31-1"/>
    <property type="protein sequence ID" value="ENSP00000357182.3"/>
    <property type="gene ID" value="ENSG00000027869.13"/>
</dbReference>
<dbReference type="Ensembl" id="ENST00000392306.2">
    <molecule id="Q9NP31-2"/>
    <property type="protein sequence ID" value="ENSP00000376123.2"/>
    <property type="gene ID" value="ENSG00000027869.13"/>
</dbReference>
<dbReference type="GeneID" id="9047"/>
<dbReference type="KEGG" id="hsa:9047"/>
<dbReference type="MANE-Select" id="ENST00000368199.8">
    <property type="protein sequence ID" value="ENSP00000357182.3"/>
    <property type="RefSeq nucleotide sequence ID" value="NM_003975.4"/>
    <property type="RefSeq protein sequence ID" value="NP_003966.2"/>
</dbReference>
<dbReference type="UCSC" id="uc001fqd.3">
    <molecule id="Q9NP31-1"/>
    <property type="organism name" value="human"/>
</dbReference>
<dbReference type="AGR" id="HGNC:10821"/>
<dbReference type="CTD" id="9047"/>
<dbReference type="DisGeNET" id="9047"/>
<dbReference type="GeneCards" id="SH2D2A"/>
<dbReference type="HGNC" id="HGNC:10821">
    <property type="gene designation" value="SH2D2A"/>
</dbReference>
<dbReference type="HPA" id="ENSG00000027869">
    <property type="expression patterns" value="Tissue enhanced (lymphoid)"/>
</dbReference>
<dbReference type="MIM" id="604514">
    <property type="type" value="gene"/>
</dbReference>
<dbReference type="neXtProt" id="NX_Q9NP31"/>
<dbReference type="OpenTargets" id="ENSG00000027869"/>
<dbReference type="PharmGKB" id="PA35729"/>
<dbReference type="VEuPathDB" id="HostDB:ENSG00000027869"/>
<dbReference type="eggNOG" id="ENOG502RE0K">
    <property type="taxonomic scope" value="Eukaryota"/>
</dbReference>
<dbReference type="GeneTree" id="ENSGT00940000161903"/>
<dbReference type="HOGENOM" id="CLU_709723_0_0_1"/>
<dbReference type="InParanoid" id="Q9NP31"/>
<dbReference type="OMA" id="YSPVIKQ"/>
<dbReference type="OrthoDB" id="6108017at2759"/>
<dbReference type="PAN-GO" id="Q9NP31">
    <property type="GO annotations" value="0 GO annotations based on evolutionary models"/>
</dbReference>
<dbReference type="PhylomeDB" id="Q9NP31"/>
<dbReference type="TreeFam" id="TF336893"/>
<dbReference type="PathwayCommons" id="Q9NP31"/>
<dbReference type="Reactome" id="R-HSA-4420097">
    <property type="pathway name" value="VEGFA-VEGFR2 Pathway"/>
</dbReference>
<dbReference type="SignaLink" id="Q9NP31"/>
<dbReference type="SIGNOR" id="Q9NP31"/>
<dbReference type="BioGRID-ORCS" id="9047">
    <property type="hits" value="6 hits in 1155 CRISPR screens"/>
</dbReference>
<dbReference type="ChiTaRS" id="SH2D2A">
    <property type="organism name" value="human"/>
</dbReference>
<dbReference type="GeneWiki" id="SH2D2A"/>
<dbReference type="GenomeRNAi" id="9047"/>
<dbReference type="Pharos" id="Q9NP31">
    <property type="development level" value="Tbio"/>
</dbReference>
<dbReference type="PRO" id="PR:Q9NP31"/>
<dbReference type="Proteomes" id="UP000005640">
    <property type="component" value="Chromosome 1"/>
</dbReference>
<dbReference type="RNAct" id="Q9NP31">
    <property type="molecule type" value="protein"/>
</dbReference>
<dbReference type="Bgee" id="ENSG00000027869">
    <property type="expression patterns" value="Expressed in granulocyte and 103 other cell types or tissues"/>
</dbReference>
<dbReference type="GO" id="GO:0005737">
    <property type="term" value="C:cytoplasm"/>
    <property type="evidence" value="ECO:0000318"/>
    <property type="project" value="GO_Central"/>
</dbReference>
<dbReference type="GO" id="GO:0005829">
    <property type="term" value="C:cytosol"/>
    <property type="evidence" value="ECO:0000304"/>
    <property type="project" value="Reactome"/>
</dbReference>
<dbReference type="GO" id="GO:0017124">
    <property type="term" value="F:SH3 domain binding"/>
    <property type="evidence" value="ECO:0007669"/>
    <property type="project" value="UniProtKB-KW"/>
</dbReference>
<dbReference type="GO" id="GO:0001525">
    <property type="term" value="P:angiogenesis"/>
    <property type="evidence" value="ECO:0007669"/>
    <property type="project" value="UniProtKB-KW"/>
</dbReference>
<dbReference type="GO" id="GO:0030154">
    <property type="term" value="P:cell differentiation"/>
    <property type="evidence" value="ECO:0007669"/>
    <property type="project" value="UniProtKB-KW"/>
</dbReference>
<dbReference type="GO" id="GO:0007165">
    <property type="term" value="P:signal transduction"/>
    <property type="evidence" value="ECO:0000304"/>
    <property type="project" value="ProtInc"/>
</dbReference>
<dbReference type="GO" id="GO:0042098">
    <property type="term" value="P:T cell proliferation"/>
    <property type="evidence" value="ECO:0007669"/>
    <property type="project" value="Ensembl"/>
</dbReference>
<dbReference type="CDD" id="cd10416">
    <property type="entry name" value="SH2_SH2D2A"/>
    <property type="match status" value="1"/>
</dbReference>
<dbReference type="FunFam" id="3.30.505.10:FF:000075">
    <property type="entry name" value="SH2 domain containing 2A"/>
    <property type="match status" value="1"/>
</dbReference>
<dbReference type="Gene3D" id="3.30.505.10">
    <property type="entry name" value="SH2 domain"/>
    <property type="match status" value="1"/>
</dbReference>
<dbReference type="InterPro" id="IPR000980">
    <property type="entry name" value="SH2"/>
</dbReference>
<dbReference type="InterPro" id="IPR036860">
    <property type="entry name" value="SH2_dom_sf"/>
</dbReference>
<dbReference type="InterPro" id="IPR035884">
    <property type="entry name" value="SH2D2A_SH2"/>
</dbReference>
<dbReference type="PANTHER" id="PTHR14388:SF9">
    <property type="entry name" value="SH2 DOMAIN-CONTAINING PROTEIN 2A"/>
    <property type="match status" value="1"/>
</dbReference>
<dbReference type="PANTHER" id="PTHR14388">
    <property type="entry name" value="T CELL-SPECIFIC ADAPTER PROTEIN TSAD"/>
    <property type="match status" value="1"/>
</dbReference>
<dbReference type="Pfam" id="PF00017">
    <property type="entry name" value="SH2"/>
    <property type="match status" value="1"/>
</dbReference>
<dbReference type="PRINTS" id="PR00401">
    <property type="entry name" value="SH2DOMAIN"/>
</dbReference>
<dbReference type="SMART" id="SM00252">
    <property type="entry name" value="SH2"/>
    <property type="match status" value="1"/>
</dbReference>
<dbReference type="SUPFAM" id="SSF55550">
    <property type="entry name" value="SH2 domain"/>
    <property type="match status" value="1"/>
</dbReference>
<dbReference type="PROSITE" id="PS50001">
    <property type="entry name" value="SH2"/>
    <property type="match status" value="1"/>
</dbReference>
<organism>
    <name type="scientific">Homo sapiens</name>
    <name type="common">Human</name>
    <dbReference type="NCBI Taxonomy" id="9606"/>
    <lineage>
        <taxon>Eukaryota</taxon>
        <taxon>Metazoa</taxon>
        <taxon>Chordata</taxon>
        <taxon>Craniata</taxon>
        <taxon>Vertebrata</taxon>
        <taxon>Euteleostomi</taxon>
        <taxon>Mammalia</taxon>
        <taxon>Eutheria</taxon>
        <taxon>Euarchontoglires</taxon>
        <taxon>Primates</taxon>
        <taxon>Haplorrhini</taxon>
        <taxon>Catarrhini</taxon>
        <taxon>Hominidae</taxon>
        <taxon>Homo</taxon>
    </lineage>
</organism>
<name>SH22A_HUMAN</name>
<sequence length="389" mass="42934">MEFPLAQICPQGSHEAPIPTFSTFQITDMTRRSCQNLGYTAASPQAPEAASNTGNAERAEEVPGEGSLFLQAETRAWFQKTQAHWLLQHGAAPAWFHGFITRREAERLLEPKPQGCYLVRFSESAVTFVLTYRSRTCCRHFLLAQLRDGRHVVLGEDSAHARLQDLLLHYTAHPLSPYGETLTEPLARQTPEPAGLSLRTEESNFGSKSQDPNPQYSPIIKQGQAPVPMQKEGAGEKEPSQLLRPKPPIPAKPQLPPEVYTIPVPRHRPAPRPKPSNPIYNEPDEPIAFYAMGRGSPGEAPSNIYVEVEDEGLPATLGHPVLRKSWSRPVPGGQNTGGSQLHSENSVIGQGPPLPHQPPPAWRHTLPHNLSRQVLQDRGQAWLPLGPPQ</sequence>
<evidence type="ECO:0000250" key="1"/>
<evidence type="ECO:0000255" key="2"/>
<evidence type="ECO:0000255" key="3">
    <source>
        <dbReference type="PROSITE-ProRule" id="PRU00191"/>
    </source>
</evidence>
<evidence type="ECO:0000256" key="4">
    <source>
        <dbReference type="SAM" id="MobiDB-lite"/>
    </source>
</evidence>
<evidence type="ECO:0000269" key="5">
    <source>
    </source>
</evidence>
<evidence type="ECO:0000269" key="6">
    <source>
    </source>
</evidence>
<evidence type="ECO:0000269" key="7">
    <source>
    </source>
</evidence>
<evidence type="ECO:0000269" key="8">
    <source>
    </source>
</evidence>
<evidence type="ECO:0000269" key="9">
    <source ref="4"/>
</evidence>
<evidence type="ECO:0000303" key="10">
    <source>
    </source>
</evidence>
<evidence type="ECO:0000303" key="11">
    <source>
    </source>
</evidence>
<evidence type="ECO:0000303" key="12">
    <source ref="4"/>
</evidence>
<evidence type="ECO:0000305" key="13"/>
<evidence type="ECO:0007744" key="14">
    <source>
    </source>
</evidence>
<evidence type="ECO:0007744" key="15">
    <source>
    </source>
</evidence>
<comment type="function">
    <text>Could be a T-cell-specific adapter protein involved in the control of T-cell activation. May play a role in the CD4-p56-LCK-dependent signal transduction pathway. Could also play an important role in normal and pathological angiogenesis. Could be an adapter protein that facilitates and regulates interaction of KDR with effector proteins important to endothelial cell survival and proliferation.</text>
</comment>
<comment type="subunit">
    <text evidence="1">Interacts with KDR. Interacts with TXK and ITK (By similarity).</text>
</comment>
<comment type="interaction">
    <interactant intactId="EBI-490630">
        <id>Q9NP31</id>
    </interactant>
    <interactant intactId="EBI-608057">
        <id>P10275</id>
        <label>AR</label>
    </interactant>
    <organismsDiffer>false</organismsDiffer>
    <experiments>6</experiments>
</comment>
<comment type="interaction">
    <interactant intactId="EBI-490630">
        <id>Q9NP31</id>
    </interactant>
    <interactant intactId="EBI-2875625">
        <id>Q9Y575</id>
        <label>ASB3</label>
    </interactant>
    <organismsDiffer>false</organismsDiffer>
    <experiments>3</experiments>
</comment>
<comment type="interaction">
    <interactant intactId="EBI-490630">
        <id>Q9NP31</id>
    </interactant>
    <interactant intactId="EBI-10694873">
        <id>Q5VU92</id>
        <label>DCAF12L1</label>
    </interactant>
    <organismsDiffer>false</organismsDiffer>
    <experiments>3</experiments>
</comment>
<comment type="interaction">
    <interactant intactId="EBI-490630">
        <id>Q9NP31</id>
    </interactant>
    <interactant intactId="EBI-641062">
        <id>P04626</id>
        <label>ERBB2</label>
    </interactant>
    <organismsDiffer>false</organismsDiffer>
    <experiments>2</experiments>
</comment>
<comment type="interaction">
    <interactant intactId="EBI-490630">
        <id>Q9NP31</id>
    </interactant>
    <interactant intactId="EBI-10696047">
        <id>O95073-2</id>
        <label>FSBP</label>
    </interactant>
    <organismsDiffer>false</organismsDiffer>
    <experiments>3</experiments>
</comment>
<comment type="interaction">
    <interactant intactId="EBI-490630">
        <id>Q9NP31</id>
    </interactant>
    <interactant intactId="EBI-517684">
        <id>Q13480</id>
        <label>GAB1</label>
    </interactant>
    <organismsDiffer>false</organismsDiffer>
    <experiments>6</experiments>
</comment>
<comment type="interaction">
    <interactant intactId="EBI-490630">
        <id>Q9NP31</id>
    </interactant>
    <interactant intactId="EBI-1379503">
        <id>P10721</id>
        <label>KIT</label>
    </interactant>
    <organismsDiffer>false</organismsDiffer>
    <experiments>10</experiments>
</comment>
<comment type="interaction">
    <interactant intactId="EBI-490630">
        <id>Q9NP31</id>
    </interactant>
    <interactant intactId="EBI-742828">
        <id>Q14847</id>
        <label>LASP1</label>
    </interactant>
    <organismsDiffer>false</organismsDiffer>
    <experiments>2</experiments>
</comment>
<comment type="interaction">
    <interactant intactId="EBI-490630">
        <id>Q9NP31</id>
    </interactant>
    <interactant intactId="EBI-1348">
        <id>P06239</id>
        <label>LCK</label>
    </interactant>
    <organismsDiffer>false</organismsDiffer>
    <experiments>12</experiments>
</comment>
<comment type="interaction">
    <interactant intactId="EBI-490630">
        <id>Q9NP31</id>
    </interactant>
    <interactant intactId="EBI-1039152">
        <id>P08581</id>
        <label>MET</label>
    </interactant>
    <organismsDiffer>false</organismsDiffer>
    <experiments>7</experiments>
</comment>
<comment type="interaction">
    <interactant intactId="EBI-490630">
        <id>Q9NP31</id>
    </interactant>
    <interactant intactId="EBI-9090282">
        <id>P27986-2</id>
        <label>PIK3R1</label>
    </interactant>
    <organismsDiffer>false</organismsDiffer>
    <experiments>3</experiments>
</comment>
<comment type="interaction">
    <interactant intactId="EBI-490630">
        <id>Q9NP31</id>
    </interactant>
    <interactant intactId="EBI-79893">
        <id>Q92569</id>
        <label>PIK3R3</label>
    </interactant>
    <organismsDiffer>false</organismsDiffer>
    <experiments>4</experiments>
</comment>
<comment type="interaction">
    <interactant intactId="EBI-490630">
        <id>Q9NP31</id>
    </interactant>
    <interactant intactId="EBI-9089825">
        <id>Q9UF11-4</id>
        <label>PLEKHB1</label>
    </interactant>
    <organismsDiffer>false</organismsDiffer>
    <experiments>3</experiments>
</comment>
<comment type="interaction">
    <interactant intactId="EBI-490630">
        <id>Q9NP31</id>
    </interactant>
    <interactant intactId="EBI-702142">
        <id>Q05397</id>
        <label>PTK2</label>
    </interactant>
    <organismsDiffer>false</organismsDiffer>
    <experiments>3</experiments>
</comment>
<comment type="interaction">
    <interactant intactId="EBI-490630">
        <id>Q9NP31</id>
    </interactant>
    <interactant intactId="EBI-78302">
        <id>P43405</id>
        <label>SYK</label>
    </interactant>
    <organismsDiffer>false</organismsDiffer>
    <experiments>3</experiments>
</comment>
<comment type="interaction">
    <interactant intactId="EBI-490630">
        <id>Q9NP31</id>
    </interactant>
    <interactant intactId="EBI-954084">
        <id>Q96IP4</id>
        <label>TENT5A</label>
    </interactant>
    <organismsDiffer>false</organismsDiffer>
    <experiments>3</experiments>
</comment>
<comment type="interaction">
    <interactant intactId="EBI-490630">
        <id>Q9NP31</id>
    </interactant>
    <interactant intactId="EBI-752030">
        <id>Q96A09</id>
        <label>TENT5B</label>
    </interactant>
    <organismsDiffer>false</organismsDiffer>
    <experiments>3</experiments>
</comment>
<comment type="subcellular location">
    <subcellularLocation>
        <location>Cytoplasm</location>
    </subcellularLocation>
</comment>
<comment type="alternative products">
    <event type="alternative splicing"/>
    <isoform>
        <id>Q9NP31-1</id>
        <name>2</name>
        <sequence type="displayed"/>
    </isoform>
    <isoform>
        <id>Q9NP31-2</id>
        <name>1</name>
        <sequence type="described" ref="VSP_003966"/>
    </isoform>
    <isoform>
        <id>Q9NP31-3</id>
        <name>3</name>
        <sequence type="described" ref="VSP_003965"/>
    </isoform>
    <isoform>
        <id>Q9NP31-4</id>
        <name>4</name>
        <sequence type="described" ref="VSP_046378"/>
    </isoform>
</comment>
<comment type="tissue specificity">
    <text>Expression limited to tissues of the immune system and, in particular, activated T-cells. Expressed in peripheral blood leukocytes, thymus and spleen. Much lower expression or undetectable, in brain, placenta, skeletal muscle, prostate, testis, ovary, small intestine, and colon. Expressed at low levels in unstimulated T-cells, but not expressed in normal resting or activated B-cells. According to PubMed:10692392, expression is not restricted to activated T-cells, but strongly expressed in blood cell lineages, the endothelium and other cell and tissue types, such as heart, lung, and liver.</text>
</comment>
<comment type="induction">
    <text>Rapidly induced after activation of T-cells. However, the gene continues to be expressed in long-term cultures of activated T-cells.</text>
</comment>
<comment type="PTM">
    <text>Phosphorylated on tyrosine residues.</text>
</comment>
<comment type="sequence caution" evidence="13">
    <conflict type="erroneous initiation">
        <sequence resource="EMBL-CDS" id="AAC99298"/>
    </conflict>
</comment>
<proteinExistence type="evidence at protein level"/>
<gene>
    <name type="primary">SH2D2A</name>
    <name type="synonym">SCAP</name>
    <name type="synonym">TSAD</name>
    <name type="synonym">VRAP</name>
</gene>
<protein>
    <recommendedName>
        <fullName>SH2 domain-containing protein 2A</fullName>
    </recommendedName>
    <alternativeName>
        <fullName>SH2 domain-containing adapter protein</fullName>
    </alternativeName>
    <alternativeName>
        <fullName>T cell-specific adapter protein</fullName>
        <shortName>TSAd</shortName>
    </alternativeName>
    <alternativeName>
        <fullName>VEGF receptor-associated protein</fullName>
    </alternativeName>
</protein>
<feature type="chain" id="PRO_0000097726" description="SH2 domain-containing protein 2A">
    <location>
        <begin position="1"/>
        <end position="389"/>
    </location>
</feature>
<feature type="domain" description="SH2" evidence="3">
    <location>
        <begin position="95"/>
        <end position="186"/>
    </location>
</feature>
<feature type="region of interest" description="Disordered" evidence="4">
    <location>
        <begin position="41"/>
        <end position="63"/>
    </location>
</feature>
<feature type="region of interest" description="Disordered" evidence="4">
    <location>
        <begin position="190"/>
        <end position="295"/>
    </location>
</feature>
<feature type="region of interest" description="Disordered" evidence="4">
    <location>
        <begin position="324"/>
        <end position="389"/>
    </location>
</feature>
<feature type="short sequence motif" description="SH3-binding" evidence="2">
    <location>
        <begin position="244"/>
        <end position="250"/>
    </location>
</feature>
<feature type="short sequence motif" description="SH3-binding" evidence="2">
    <location>
        <begin position="272"/>
        <end position="278"/>
    </location>
</feature>
<feature type="compositionally biased region" description="Polar residues" evidence="4">
    <location>
        <begin position="203"/>
        <end position="216"/>
    </location>
</feature>
<feature type="compositionally biased region" description="Pro residues" evidence="4">
    <location>
        <begin position="245"/>
        <end position="256"/>
    </location>
</feature>
<feature type="compositionally biased region" description="Polar residues" evidence="4">
    <location>
        <begin position="337"/>
        <end position="348"/>
    </location>
</feature>
<feature type="compositionally biased region" description="Pro residues" evidence="4">
    <location>
        <begin position="352"/>
        <end position="361"/>
    </location>
</feature>
<feature type="modified residue" description="Phosphoserine" evidence="15">
    <location>
        <position position="217"/>
    </location>
</feature>
<feature type="modified residue" description="Phosphoserine" evidence="15">
    <location>
        <position position="296"/>
    </location>
</feature>
<feature type="splice variant" id="VSP_003965" description="In isoform 3." evidence="11 12">
    <location>
        <begin position="1"/>
        <end position="28"/>
    </location>
</feature>
<feature type="splice variant" id="VSP_046378" description="In isoform 4." evidence="10">
    <original>MEFPLAQICPQGSHEAPIPTF</original>
    <variation>MSP</variation>
    <location>
        <begin position="1"/>
        <end position="21"/>
    </location>
</feature>
<feature type="splice variant" id="VSP_003966" description="In isoform 1." evidence="11">
    <original>R</original>
    <variation>RRVRPPLSVTH</variation>
    <location>
        <position position="102"/>
    </location>
</feature>
<feature type="sequence variant" id="VAR_024349" description="In dbSNP:rs926103." evidence="5 6 7 8 9 14">
    <original>N</original>
    <variation>S</variation>
    <location>
        <position position="52"/>
    </location>
</feature>
<feature type="sequence variant" id="VAR_056986" description="In dbSNP:rs12072861.">
    <original>R</original>
    <variation>C</variation>
    <location>
        <position position="272"/>
    </location>
</feature>
<feature type="sequence conflict" description="In Ref. 1; AAF69027." evidence="13" ref="1">
    <original>ASP</original>
    <variation>GIS</variation>
    <location>
        <begin position="42"/>
        <end position="44"/>
    </location>
</feature>
<feature type="sequence conflict" description="In Ref. 2; AAV34675." evidence="13" ref="2">
    <original>P</original>
    <variation>S</variation>
    <location>
        <position position="111"/>
    </location>
</feature>
<feature type="sequence conflict" description="In Ref. 2; AAV34675." evidence="13" ref="2">
    <original>L</original>
    <variation>F</variation>
    <location>
        <position position="385"/>
    </location>
</feature>
<reference key="1">
    <citation type="journal article" date="1998" name="J. Biol. Chem.">
        <title>Molecular cloning of a T cell-specific adapter protein (TSAd) containing an Src homology (SH) 2 domain and putative SH3 and phosphotyrosine binding sites.</title>
        <authorList>
            <person name="Spurkland A."/>
            <person name="Brinchmann J.E."/>
            <person name="Markussen G."/>
            <person name="Pedeutour F."/>
            <person name="Munthe E."/>
            <person name="Lea T."/>
            <person name="Vartdal F."/>
            <person name="Aasheim H.-C."/>
        </authorList>
    </citation>
    <scope>NUCLEOTIDE SEQUENCE [MRNA] (ISOFORMS 1; 2 AND 3)</scope>
    <scope>VARIANT SER-52</scope>
    <source>
        <tissue>T-cell</tissue>
    </source>
</reference>
<reference key="2">
    <citation type="journal article" date="2000" name="Immunogenetics">
        <title>The SH2D2A gene encoding the T-cell-specific adapter protein (TSAd) is localized centromeric to the CD1 gene cluster on human Chromosome 1.</title>
        <authorList>
            <person name="Dai K.Z."/>
            <person name="Vergnaud G."/>
            <person name="Ando A."/>
            <person name="Inoko H."/>
            <person name="Spurkland A."/>
        </authorList>
    </citation>
    <scope>NUCLEOTIDE SEQUENCE [MRNA] (ISOFORM 4)</scope>
    <scope>ALTERNATIVE SPLICING</scope>
    <scope>VARIANT SER-52</scope>
</reference>
<reference key="3">
    <citation type="journal article" date="2000" name="J. Biol. Chem.">
        <title>VRAP is an adaptor protein that binds KDR, a receptor for vascular endothelial cell growth factor.</title>
        <authorList>
            <person name="Wu L.-W."/>
            <person name="Mayo L.D."/>
            <person name="Dunbar J.D."/>
            <person name="Kessler K.M."/>
            <person name="Ozes O.N."/>
            <person name="Warren R.S."/>
            <person name="Donner D.B."/>
        </authorList>
    </citation>
    <scope>NUCLEOTIDE SEQUENCE [MRNA] (ISOFORM 2)</scope>
    <scope>INTERACTION WITH KDR</scope>
    <scope>VARIANT SER-52</scope>
    <source>
        <tissue>B-cell</tissue>
    </source>
</reference>
<reference key="4">
    <citation type="submission" date="1998-02" db="EMBL/GenBank/DDBJ databases">
        <authorList>
            <person name="Lee J.-S."/>
            <person name="Suh K.S."/>
            <person name="Burr J.G."/>
        </authorList>
    </citation>
    <scope>NUCLEOTIDE SEQUENCE [MRNA] (ISOFORM 3)</scope>
    <scope>VARIANT SER-52</scope>
    <source>
        <tissue>B-cell</tissue>
    </source>
</reference>
<reference key="5">
    <citation type="submission" date="2005-04" db="EMBL/GenBank/DDBJ databases">
        <authorList>
            <person name="Suzuki Y."/>
            <person name="Sugano S."/>
            <person name="Totoki Y."/>
            <person name="Toyoda A."/>
            <person name="Takeda T."/>
            <person name="Sakaki Y."/>
            <person name="Tanaka A."/>
            <person name="Yokoyama S."/>
        </authorList>
    </citation>
    <scope>NUCLEOTIDE SEQUENCE [LARGE SCALE MRNA]</scope>
    <source>
        <tissue>Dermoid cancer</tissue>
    </source>
</reference>
<reference key="6">
    <citation type="journal article" date="2006" name="Nature">
        <title>The DNA sequence and biological annotation of human chromosome 1.</title>
        <authorList>
            <person name="Gregory S.G."/>
            <person name="Barlow K.F."/>
            <person name="McLay K.E."/>
            <person name="Kaul R."/>
            <person name="Swarbreck D."/>
            <person name="Dunham A."/>
            <person name="Scott C.E."/>
            <person name="Howe K.L."/>
            <person name="Woodfine K."/>
            <person name="Spencer C.C.A."/>
            <person name="Jones M.C."/>
            <person name="Gillson C."/>
            <person name="Searle S."/>
            <person name="Zhou Y."/>
            <person name="Kokocinski F."/>
            <person name="McDonald L."/>
            <person name="Evans R."/>
            <person name="Phillips K."/>
            <person name="Atkinson A."/>
            <person name="Cooper R."/>
            <person name="Jones C."/>
            <person name="Hall R.E."/>
            <person name="Andrews T.D."/>
            <person name="Lloyd C."/>
            <person name="Ainscough R."/>
            <person name="Almeida J.P."/>
            <person name="Ambrose K.D."/>
            <person name="Anderson F."/>
            <person name="Andrew R.W."/>
            <person name="Ashwell R.I.S."/>
            <person name="Aubin K."/>
            <person name="Babbage A.K."/>
            <person name="Bagguley C.L."/>
            <person name="Bailey J."/>
            <person name="Beasley H."/>
            <person name="Bethel G."/>
            <person name="Bird C.P."/>
            <person name="Bray-Allen S."/>
            <person name="Brown J.Y."/>
            <person name="Brown A.J."/>
            <person name="Buckley D."/>
            <person name="Burton J."/>
            <person name="Bye J."/>
            <person name="Carder C."/>
            <person name="Chapman J.C."/>
            <person name="Clark S.Y."/>
            <person name="Clarke G."/>
            <person name="Clee C."/>
            <person name="Cobley V."/>
            <person name="Collier R.E."/>
            <person name="Corby N."/>
            <person name="Coville G.J."/>
            <person name="Davies J."/>
            <person name="Deadman R."/>
            <person name="Dunn M."/>
            <person name="Earthrowl M."/>
            <person name="Ellington A.G."/>
            <person name="Errington H."/>
            <person name="Frankish A."/>
            <person name="Frankland J."/>
            <person name="French L."/>
            <person name="Garner P."/>
            <person name="Garnett J."/>
            <person name="Gay L."/>
            <person name="Ghori M.R.J."/>
            <person name="Gibson R."/>
            <person name="Gilby L.M."/>
            <person name="Gillett W."/>
            <person name="Glithero R.J."/>
            <person name="Grafham D.V."/>
            <person name="Griffiths C."/>
            <person name="Griffiths-Jones S."/>
            <person name="Grocock R."/>
            <person name="Hammond S."/>
            <person name="Harrison E.S.I."/>
            <person name="Hart E."/>
            <person name="Haugen E."/>
            <person name="Heath P.D."/>
            <person name="Holmes S."/>
            <person name="Holt K."/>
            <person name="Howden P.J."/>
            <person name="Hunt A.R."/>
            <person name="Hunt S.E."/>
            <person name="Hunter G."/>
            <person name="Isherwood J."/>
            <person name="James R."/>
            <person name="Johnson C."/>
            <person name="Johnson D."/>
            <person name="Joy A."/>
            <person name="Kay M."/>
            <person name="Kershaw J.K."/>
            <person name="Kibukawa M."/>
            <person name="Kimberley A.M."/>
            <person name="King A."/>
            <person name="Knights A.J."/>
            <person name="Lad H."/>
            <person name="Laird G."/>
            <person name="Lawlor S."/>
            <person name="Leongamornlert D.A."/>
            <person name="Lloyd D.M."/>
            <person name="Loveland J."/>
            <person name="Lovell J."/>
            <person name="Lush M.J."/>
            <person name="Lyne R."/>
            <person name="Martin S."/>
            <person name="Mashreghi-Mohammadi M."/>
            <person name="Matthews L."/>
            <person name="Matthews N.S.W."/>
            <person name="McLaren S."/>
            <person name="Milne S."/>
            <person name="Mistry S."/>
            <person name="Moore M.J.F."/>
            <person name="Nickerson T."/>
            <person name="O'Dell C.N."/>
            <person name="Oliver K."/>
            <person name="Palmeiri A."/>
            <person name="Palmer S.A."/>
            <person name="Parker A."/>
            <person name="Patel D."/>
            <person name="Pearce A.V."/>
            <person name="Peck A.I."/>
            <person name="Pelan S."/>
            <person name="Phelps K."/>
            <person name="Phillimore B.J."/>
            <person name="Plumb R."/>
            <person name="Rajan J."/>
            <person name="Raymond C."/>
            <person name="Rouse G."/>
            <person name="Saenphimmachak C."/>
            <person name="Sehra H.K."/>
            <person name="Sheridan E."/>
            <person name="Shownkeen R."/>
            <person name="Sims S."/>
            <person name="Skuce C.D."/>
            <person name="Smith M."/>
            <person name="Steward C."/>
            <person name="Subramanian S."/>
            <person name="Sycamore N."/>
            <person name="Tracey A."/>
            <person name="Tromans A."/>
            <person name="Van Helmond Z."/>
            <person name="Wall M."/>
            <person name="Wallis J.M."/>
            <person name="White S."/>
            <person name="Whitehead S.L."/>
            <person name="Wilkinson J.E."/>
            <person name="Willey D.L."/>
            <person name="Williams H."/>
            <person name="Wilming L."/>
            <person name="Wray P.W."/>
            <person name="Wu Z."/>
            <person name="Coulson A."/>
            <person name="Vaudin M."/>
            <person name="Sulston J.E."/>
            <person name="Durbin R.M."/>
            <person name="Hubbard T."/>
            <person name="Wooster R."/>
            <person name="Dunham I."/>
            <person name="Carter N.P."/>
            <person name="McVean G."/>
            <person name="Ross M.T."/>
            <person name="Harrow J."/>
            <person name="Olson M.V."/>
            <person name="Beck S."/>
            <person name="Rogers J."/>
            <person name="Bentley D.R."/>
        </authorList>
    </citation>
    <scope>NUCLEOTIDE SEQUENCE [LARGE SCALE GENOMIC DNA]</scope>
</reference>
<reference key="7">
    <citation type="journal article" date="2004" name="Genome Res.">
        <title>The status, quality, and expansion of the NIH full-length cDNA project: the Mammalian Gene Collection (MGC).</title>
        <authorList>
            <consortium name="The MGC Project Team"/>
        </authorList>
    </citation>
    <scope>NUCLEOTIDE SEQUENCE [LARGE SCALE MRNA] (ISOFORM 2)</scope>
    <scope>VARIANT SER-52</scope>
    <source>
        <tissue>Lung</tissue>
    </source>
</reference>
<reference key="8">
    <citation type="journal article" date="2005" name="EMBO J.">
        <title>VEGF receptor-2 Y951 signaling and a role for the adapter molecule TSAd in tumor angiogenesis.</title>
        <authorList>
            <person name="Matsumoto T."/>
            <person name="Bohman S."/>
            <person name="Dixelius J."/>
            <person name="Berge T."/>
            <person name="Dimberg A."/>
            <person name="Magnusson P."/>
            <person name="Wang L."/>
            <person name="Wikner C."/>
            <person name="Qi J.H."/>
            <person name="Wernstedt C."/>
            <person name="Wu J."/>
            <person name="Bruheim S."/>
            <person name="Mugishima H."/>
            <person name="Mukhopadhyay D."/>
            <person name="Spurkland A."/>
            <person name="Claesson-Welsh L."/>
        </authorList>
    </citation>
    <scope>INTERACTION WITH KDR</scope>
</reference>
<reference key="9">
    <citation type="journal article" date="2008" name="Proc. Natl. Acad. Sci. U.S.A.">
        <title>A quantitative atlas of mitotic phosphorylation.</title>
        <authorList>
            <person name="Dephoure N."/>
            <person name="Zhou C."/>
            <person name="Villen J."/>
            <person name="Beausoleil S.A."/>
            <person name="Bakalarski C.E."/>
            <person name="Elledge S.J."/>
            <person name="Gygi S.P."/>
        </authorList>
    </citation>
    <scope>PHOSPHORYLATION [LARGE SCALE ANALYSIS] AT SER-217 AND SER-296</scope>
    <scope>IDENTIFICATION BY MASS SPECTROMETRY [LARGE SCALE ANALYSIS]</scope>
    <source>
        <tissue>Cervix carcinoma</tissue>
    </source>
</reference>
<reference key="10">
    <citation type="journal article" date="2005" name="Nat. Biotechnol.">
        <title>Immunoaffinity profiling of tyrosine phosphorylation in cancer cells.</title>
        <authorList>
            <person name="Rush J."/>
            <person name="Moritz A."/>
            <person name="Lee K.A."/>
            <person name="Guo A."/>
            <person name="Goss V.L."/>
            <person name="Spek E.J."/>
            <person name="Zhang H."/>
            <person name="Zha X.-M."/>
            <person name="Polakiewicz R.D."/>
            <person name="Comb M.J."/>
        </authorList>
    </citation>
    <scope>VARIANT [LARGE SCALE ANALYSIS] SER-52</scope>
    <scope>IDENTIFICATION BY MASS SPECTROMETRY [LARGE SCALE ANALYSIS]</scope>
</reference>
<keyword id="KW-0025">Alternative splicing</keyword>
<keyword id="KW-0037">Angiogenesis</keyword>
<keyword id="KW-0963">Cytoplasm</keyword>
<keyword id="KW-0217">Developmental protein</keyword>
<keyword id="KW-0221">Differentiation</keyword>
<keyword id="KW-0597">Phosphoprotein</keyword>
<keyword id="KW-1267">Proteomics identification</keyword>
<keyword id="KW-1185">Reference proteome</keyword>
<keyword id="KW-0727">SH2 domain</keyword>
<keyword id="KW-0729">SH3-binding</keyword>